<name>MES1_ARATH</name>
<comment type="function">
    <text evidence="2 3">Methylesterase shown to have carboxylesterase activity, methyl indole-3-acetic acid (MeIAA) esterase activity, methyl salicylate (MeSA) esterase activity and methyl jasmonate (MeJA) esterase activity in vitro. Required to convert methyl salicylate (MeSA) to salicylic acid (SA) as part of the signal transduction pathways that activate systemic acquired resistance in systemic tissue. MeSA is believed to be an inactive form that needs to be demethylated to exert a biological effect.</text>
</comment>
<comment type="catalytic activity">
    <reaction evidence="2">
        <text>methyl (indol-3-yl)acetate + H2O = (indol-3-yl)acetate + methanol + H(+)</text>
        <dbReference type="Rhea" id="RHEA:32919"/>
        <dbReference type="ChEBI" id="CHEBI:15377"/>
        <dbReference type="ChEBI" id="CHEBI:15378"/>
        <dbReference type="ChEBI" id="CHEBI:17790"/>
        <dbReference type="ChEBI" id="CHEBI:30854"/>
        <dbReference type="ChEBI" id="CHEBI:72782"/>
    </reaction>
    <physiologicalReaction direction="left-to-right" evidence="2">
        <dbReference type="Rhea" id="RHEA:32920"/>
    </physiologicalReaction>
</comment>
<comment type="catalytic activity">
    <reaction evidence="2">
        <text>methyl (-)-jasmonate + H2O = jasmonate + methanol + H(+)</text>
        <dbReference type="Rhea" id="RHEA:55372"/>
        <dbReference type="ChEBI" id="CHEBI:15377"/>
        <dbReference type="ChEBI" id="CHEBI:15378"/>
        <dbReference type="ChEBI" id="CHEBI:15929"/>
        <dbReference type="ChEBI" id="CHEBI:17790"/>
        <dbReference type="ChEBI" id="CHEBI:58431"/>
    </reaction>
    <physiologicalReaction direction="left-to-right" evidence="2">
        <dbReference type="Rhea" id="RHEA:55373"/>
    </physiologicalReaction>
</comment>
<comment type="catalytic activity">
    <reaction evidence="2">
        <text>methyl salicylate + H2O = salicylate + methanol + H(+)</text>
        <dbReference type="Rhea" id="RHEA:33611"/>
        <dbReference type="ChEBI" id="CHEBI:15377"/>
        <dbReference type="ChEBI" id="CHEBI:15378"/>
        <dbReference type="ChEBI" id="CHEBI:17790"/>
        <dbReference type="ChEBI" id="CHEBI:30762"/>
        <dbReference type="ChEBI" id="CHEBI:31832"/>
    </reaction>
    <physiologicalReaction direction="left-to-right" evidence="2">
        <dbReference type="Rhea" id="RHEA:33612"/>
    </physiologicalReaction>
</comment>
<comment type="activity regulation">
    <text evidence="3">Esterase activity is down-regulated by salicylic acid (SA).</text>
</comment>
<comment type="biophysicochemical properties">
    <kinetics>
        <KM evidence="3">57.3 uM for methyl salicylate (MeSA)</KM>
        <Vmax evidence="3">28.92 nmol/min/ug enzyme with methyl salicylate (MeSA) as substrate</Vmax>
    </kinetics>
</comment>
<comment type="pathway">
    <text evidence="2">Plant hormone biosynthesis.</text>
</comment>
<comment type="pathway">
    <text evidence="2">Lipid metabolism; oxylipin biosynthesis.</text>
</comment>
<comment type="induction">
    <text evidence="3">By pathogen infection.</text>
</comment>
<comment type="miscellaneous">
    <text>Expression of MES1 can restore systemic acquired resistance in SAR-deficient tobacco plants.</text>
</comment>
<comment type="similarity">
    <text evidence="5">Belongs to the AB hydrolase superfamily. Methylesterase family.</text>
</comment>
<keyword id="KW-0378">Hydrolase</keyword>
<keyword id="KW-0391">Immunity</keyword>
<keyword id="KW-0399">Innate immunity</keyword>
<keyword id="KW-0611">Plant defense</keyword>
<keyword id="KW-1185">Reference proteome</keyword>
<reference key="1">
    <citation type="journal article" date="1999" name="Nature">
        <title>Sequence and analysis of chromosome 2 of the plant Arabidopsis thaliana.</title>
        <authorList>
            <person name="Lin X."/>
            <person name="Kaul S."/>
            <person name="Rounsley S.D."/>
            <person name="Shea T.P."/>
            <person name="Benito M.-I."/>
            <person name="Town C.D."/>
            <person name="Fujii C.Y."/>
            <person name="Mason T.M."/>
            <person name="Bowman C.L."/>
            <person name="Barnstead M.E."/>
            <person name="Feldblyum T.V."/>
            <person name="Buell C.R."/>
            <person name="Ketchum K.A."/>
            <person name="Lee J.J."/>
            <person name="Ronning C.M."/>
            <person name="Koo H.L."/>
            <person name="Moffat K.S."/>
            <person name="Cronin L.A."/>
            <person name="Shen M."/>
            <person name="Pai G."/>
            <person name="Van Aken S."/>
            <person name="Umayam L."/>
            <person name="Tallon L.J."/>
            <person name="Gill J.E."/>
            <person name="Adams M.D."/>
            <person name="Carrera A.J."/>
            <person name="Creasy T.H."/>
            <person name="Goodman H.M."/>
            <person name="Somerville C.R."/>
            <person name="Copenhaver G.P."/>
            <person name="Preuss D."/>
            <person name="Nierman W.C."/>
            <person name="White O."/>
            <person name="Eisen J.A."/>
            <person name="Salzberg S.L."/>
            <person name="Fraser C.M."/>
            <person name="Venter J.C."/>
        </authorList>
    </citation>
    <scope>NUCLEOTIDE SEQUENCE [LARGE SCALE GENOMIC DNA]</scope>
    <source>
        <strain>cv. Columbia</strain>
    </source>
</reference>
<reference key="2">
    <citation type="journal article" date="2017" name="Plant J.">
        <title>Araport11: a complete reannotation of the Arabidopsis thaliana reference genome.</title>
        <authorList>
            <person name="Cheng C.Y."/>
            <person name="Krishnakumar V."/>
            <person name="Chan A.P."/>
            <person name="Thibaud-Nissen F."/>
            <person name="Schobel S."/>
            <person name="Town C.D."/>
        </authorList>
    </citation>
    <scope>GENOME REANNOTATION</scope>
    <source>
        <strain>cv. Columbia</strain>
    </source>
</reference>
<reference key="3">
    <citation type="journal article" date="2003" name="Science">
        <title>Empirical analysis of transcriptional activity in the Arabidopsis genome.</title>
        <authorList>
            <person name="Yamada K."/>
            <person name="Lim J."/>
            <person name="Dale J.M."/>
            <person name="Chen H."/>
            <person name="Shinn P."/>
            <person name="Palm C.J."/>
            <person name="Southwick A.M."/>
            <person name="Wu H.C."/>
            <person name="Kim C.J."/>
            <person name="Nguyen M."/>
            <person name="Pham P.K."/>
            <person name="Cheuk R.F."/>
            <person name="Karlin-Newmann G."/>
            <person name="Liu S.X."/>
            <person name="Lam B."/>
            <person name="Sakano H."/>
            <person name="Wu T."/>
            <person name="Yu G."/>
            <person name="Miranda M."/>
            <person name="Quach H.L."/>
            <person name="Tripp M."/>
            <person name="Chang C.H."/>
            <person name="Lee J.M."/>
            <person name="Toriumi M.J."/>
            <person name="Chan M.M."/>
            <person name="Tang C.C."/>
            <person name="Onodera C.S."/>
            <person name="Deng J.M."/>
            <person name="Akiyama K."/>
            <person name="Ansari Y."/>
            <person name="Arakawa T."/>
            <person name="Banh J."/>
            <person name="Banno F."/>
            <person name="Bowser L."/>
            <person name="Brooks S.Y."/>
            <person name="Carninci P."/>
            <person name="Chao Q."/>
            <person name="Choy N."/>
            <person name="Enju A."/>
            <person name="Goldsmith A.D."/>
            <person name="Gurjal M."/>
            <person name="Hansen N.F."/>
            <person name="Hayashizaki Y."/>
            <person name="Johnson-Hopson C."/>
            <person name="Hsuan V.W."/>
            <person name="Iida K."/>
            <person name="Karnes M."/>
            <person name="Khan S."/>
            <person name="Koesema E."/>
            <person name="Ishida J."/>
            <person name="Jiang P.X."/>
            <person name="Jones T."/>
            <person name="Kawai J."/>
            <person name="Kamiya A."/>
            <person name="Meyers C."/>
            <person name="Nakajima M."/>
            <person name="Narusaka M."/>
            <person name="Seki M."/>
            <person name="Sakurai T."/>
            <person name="Satou M."/>
            <person name="Tamse R."/>
            <person name="Vaysberg M."/>
            <person name="Wallender E.K."/>
            <person name="Wong C."/>
            <person name="Yamamura Y."/>
            <person name="Yuan S."/>
            <person name="Shinozaki K."/>
            <person name="Davis R.W."/>
            <person name="Theologis A."/>
            <person name="Ecker J.R."/>
        </authorList>
    </citation>
    <scope>NUCLEOTIDE SEQUENCE [LARGE SCALE MRNA]</scope>
    <source>
        <strain>cv. Columbia</strain>
    </source>
</reference>
<reference key="4">
    <citation type="submission" date="2004-06" db="EMBL/GenBank/DDBJ databases">
        <title>Arabidopsis ORF clones.</title>
        <authorList>
            <person name="Cheuk R.F."/>
            <person name="Chen H."/>
            <person name="Kim C.J."/>
            <person name="Shinn P."/>
            <person name="Ecker J.R."/>
        </authorList>
    </citation>
    <scope>NUCLEOTIDE SEQUENCE [LARGE SCALE MRNA]</scope>
    <source>
        <strain>cv. Columbia</strain>
    </source>
</reference>
<reference key="5">
    <citation type="journal article" date="2008" name="Plant J.">
        <title>Identification of likely orthologs of tobacco salicylic acid-binding protein 2 and their role in systemic acquired resistance in Arabidopsis thaliana.</title>
        <authorList>
            <person name="Vlot A.C."/>
            <person name="Liu P.P."/>
            <person name="Cameron R.K."/>
            <person name="Park S.W."/>
            <person name="Yang Y."/>
            <person name="Kumar D."/>
            <person name="Zhou F."/>
            <person name="Padukkavidana T."/>
            <person name="Gustafsson C."/>
            <person name="Pichersky E."/>
            <person name="Klessig D.F."/>
        </authorList>
    </citation>
    <scope>FUNCTION</scope>
    <scope>ACTIVITY REGULATION</scope>
    <scope>BIOPHYSICOCHEMICAL PROPERTIES</scope>
    <scope>INDUCTION BY PATHOGEN</scope>
</reference>
<reference key="6">
    <citation type="journal article" date="2008" name="Plant Physiol.">
        <title>Inactive methyl indole-3-acetic acid ester can be hydrolyzed and activated by several esterases belonging to the AtMES esterase family of Arabidopsis.</title>
        <authorList>
            <person name="Yang Y."/>
            <person name="Xu R."/>
            <person name="Ma C.J."/>
            <person name="Vlot A.C."/>
            <person name="Klessig D.F."/>
            <person name="Pichersky E."/>
        </authorList>
    </citation>
    <scope>GENE FAMILY</scope>
    <scope>FUNCTION</scope>
    <scope>CATALYTIC ACTIVITY</scope>
    <scope>PATHWAY</scope>
</reference>
<evidence type="ECO:0000250" key="1"/>
<evidence type="ECO:0000269" key="2">
    <source>
    </source>
</evidence>
<evidence type="ECO:0000269" key="3">
    <source>
    </source>
</evidence>
<evidence type="ECO:0000303" key="4">
    <source>
    </source>
</evidence>
<evidence type="ECO:0000305" key="5"/>
<evidence type="ECO:0000312" key="6">
    <source>
        <dbReference type="Araport" id="AT2G23620"/>
    </source>
</evidence>
<evidence type="ECO:0000312" key="7">
    <source>
        <dbReference type="EMBL" id="AAM14864.1"/>
    </source>
</evidence>
<gene>
    <name evidence="4" type="primary">MES1</name>
    <name evidence="6" type="ordered locus">At2g23620</name>
    <name evidence="7" type="ORF">F26B6.27</name>
</gene>
<proteinExistence type="evidence at protein level"/>
<feature type="chain" id="PRO_0000418176" description="Methylesterase 1">
    <location>
        <begin position="1"/>
        <end position="263"/>
    </location>
</feature>
<feature type="active site" description="Acyl-ester intermediate" evidence="1">
    <location>
        <position position="85"/>
    </location>
</feature>
<feature type="active site" description="Charge relay system" evidence="1">
    <location>
        <position position="213"/>
    </location>
</feature>
<feature type="active site" description="Charge relay system" evidence="1">
    <location>
        <position position="241"/>
    </location>
</feature>
<feature type="sequence conflict" description="In Ref. 3; AAO22676." evidence="5" ref="3">
    <original>E</original>
    <variation>K</variation>
    <location>
        <position position="100"/>
    </location>
</feature>
<accession>Q8S8S9</accession>
<accession>Q84WR3</accession>
<dbReference type="EC" id="3.1.1.-" evidence="2"/>
<dbReference type="EMBL" id="AC003040">
    <property type="protein sequence ID" value="AAM14864.1"/>
    <property type="molecule type" value="Genomic_DNA"/>
</dbReference>
<dbReference type="EMBL" id="CP002685">
    <property type="protein sequence ID" value="AEC07473.1"/>
    <property type="molecule type" value="Genomic_DNA"/>
</dbReference>
<dbReference type="EMBL" id="BT002859">
    <property type="protein sequence ID" value="AAO22676.1"/>
    <property type="molecule type" value="mRNA"/>
</dbReference>
<dbReference type="EMBL" id="BT014881">
    <property type="protein sequence ID" value="AAT41864.1"/>
    <property type="molecule type" value="mRNA"/>
</dbReference>
<dbReference type="PIR" id="T01151">
    <property type="entry name" value="T01151"/>
</dbReference>
<dbReference type="RefSeq" id="NP_179943.1">
    <property type="nucleotide sequence ID" value="NM_127926.3"/>
</dbReference>
<dbReference type="SMR" id="Q8S8S9"/>
<dbReference type="FunCoup" id="Q8S8S9">
    <property type="interactions" value="90"/>
</dbReference>
<dbReference type="STRING" id="3702.Q8S8S9"/>
<dbReference type="ESTHER" id="arath-MES1">
    <property type="family name" value="Hydroxynitrile_lyase"/>
</dbReference>
<dbReference type="PaxDb" id="3702-AT2G23620.1"/>
<dbReference type="ProteomicsDB" id="250647"/>
<dbReference type="EnsemblPlants" id="AT2G23620.1">
    <property type="protein sequence ID" value="AT2G23620.1"/>
    <property type="gene ID" value="AT2G23620"/>
</dbReference>
<dbReference type="GeneID" id="816894"/>
<dbReference type="Gramene" id="AT2G23620.1">
    <property type="protein sequence ID" value="AT2G23620.1"/>
    <property type="gene ID" value="AT2G23620"/>
</dbReference>
<dbReference type="KEGG" id="ath:AT2G23620"/>
<dbReference type="Araport" id="AT2G23620"/>
<dbReference type="TAIR" id="AT2G23620">
    <property type="gene designation" value="MES1"/>
</dbReference>
<dbReference type="eggNOG" id="ENOG502QR2J">
    <property type="taxonomic scope" value="Eukaryota"/>
</dbReference>
<dbReference type="HOGENOM" id="CLU_046066_0_1_1"/>
<dbReference type="InParanoid" id="Q8S8S9"/>
<dbReference type="OMA" id="SMAHEAW"/>
<dbReference type="PhylomeDB" id="Q8S8S9"/>
<dbReference type="BioCyc" id="ARA:AT2G23620-MONOMER"/>
<dbReference type="SABIO-RK" id="Q8S8S9"/>
<dbReference type="UniPathway" id="UPA00382"/>
<dbReference type="PRO" id="PR:Q8S8S9"/>
<dbReference type="Proteomes" id="UP000006548">
    <property type="component" value="Chromosome 2"/>
</dbReference>
<dbReference type="ExpressionAtlas" id="Q8S8S9">
    <property type="expression patterns" value="baseline and differential"/>
</dbReference>
<dbReference type="GO" id="GO:0016788">
    <property type="term" value="F:hydrolase activity, acting on ester bonds"/>
    <property type="evidence" value="ECO:0000314"/>
    <property type="project" value="TAIR"/>
</dbReference>
<dbReference type="GO" id="GO:0080030">
    <property type="term" value="F:methyl indole-3-acetate esterase activity"/>
    <property type="evidence" value="ECO:0000314"/>
    <property type="project" value="TAIR"/>
</dbReference>
<dbReference type="GO" id="GO:0080032">
    <property type="term" value="F:methyl jasmonate esterase activity"/>
    <property type="evidence" value="ECO:0000314"/>
    <property type="project" value="TAIR"/>
</dbReference>
<dbReference type="GO" id="GO:0080031">
    <property type="term" value="F:methyl salicylate esterase activity"/>
    <property type="evidence" value="ECO:0000314"/>
    <property type="project" value="TAIR"/>
</dbReference>
<dbReference type="GO" id="GO:0050832">
    <property type="term" value="P:defense response to fungus"/>
    <property type="evidence" value="ECO:0000304"/>
    <property type="project" value="TAIR"/>
</dbReference>
<dbReference type="GO" id="GO:0045087">
    <property type="term" value="P:innate immune response"/>
    <property type="evidence" value="ECO:0007669"/>
    <property type="project" value="UniProtKB-KW"/>
</dbReference>
<dbReference type="GO" id="GO:0031408">
    <property type="term" value="P:oxylipin biosynthetic process"/>
    <property type="evidence" value="ECO:0007669"/>
    <property type="project" value="UniProtKB-UniPathway"/>
</dbReference>
<dbReference type="GO" id="GO:0009696">
    <property type="term" value="P:salicylic acid metabolic process"/>
    <property type="evidence" value="ECO:0000315"/>
    <property type="project" value="TAIR"/>
</dbReference>
<dbReference type="GO" id="GO:0009627">
    <property type="term" value="P:systemic acquired resistance"/>
    <property type="evidence" value="ECO:0000316"/>
    <property type="project" value="TAIR"/>
</dbReference>
<dbReference type="FunFam" id="3.40.50.1820:FF:000051">
    <property type="entry name" value="(S)-hydroxynitrile lyase"/>
    <property type="match status" value="1"/>
</dbReference>
<dbReference type="Gene3D" id="3.40.50.1820">
    <property type="entry name" value="alpha/beta hydrolase"/>
    <property type="match status" value="1"/>
</dbReference>
<dbReference type="InterPro" id="IPR000073">
    <property type="entry name" value="AB_hydrolase_1"/>
</dbReference>
<dbReference type="InterPro" id="IPR029058">
    <property type="entry name" value="AB_hydrolase_fold"/>
</dbReference>
<dbReference type="InterPro" id="IPR045889">
    <property type="entry name" value="MES/HNL"/>
</dbReference>
<dbReference type="PANTHER" id="PTHR10992:SF1083">
    <property type="entry name" value="METHYLESTERASE 1"/>
    <property type="match status" value="1"/>
</dbReference>
<dbReference type="PANTHER" id="PTHR10992">
    <property type="entry name" value="METHYLESTERASE FAMILY MEMBER"/>
    <property type="match status" value="1"/>
</dbReference>
<dbReference type="Pfam" id="PF12697">
    <property type="entry name" value="Abhydrolase_6"/>
    <property type="match status" value="1"/>
</dbReference>
<dbReference type="SUPFAM" id="SSF53474">
    <property type="entry name" value="alpha/beta-Hydrolases"/>
    <property type="match status" value="1"/>
</dbReference>
<dbReference type="PROSITE" id="PS00120">
    <property type="entry name" value="LIPASE_SER"/>
    <property type="match status" value="1"/>
</dbReference>
<protein>
    <recommendedName>
        <fullName evidence="4">Methylesterase 1</fullName>
        <shortName evidence="4">AtMES1</shortName>
        <ecNumber evidence="2">3.1.1.-</ecNumber>
    </recommendedName>
</protein>
<organism>
    <name type="scientific">Arabidopsis thaliana</name>
    <name type="common">Mouse-ear cress</name>
    <dbReference type="NCBI Taxonomy" id="3702"/>
    <lineage>
        <taxon>Eukaryota</taxon>
        <taxon>Viridiplantae</taxon>
        <taxon>Streptophyta</taxon>
        <taxon>Embryophyta</taxon>
        <taxon>Tracheophyta</taxon>
        <taxon>Spermatophyta</taxon>
        <taxon>Magnoliopsida</taxon>
        <taxon>eudicotyledons</taxon>
        <taxon>Gunneridae</taxon>
        <taxon>Pentapetalae</taxon>
        <taxon>rosids</taxon>
        <taxon>malvids</taxon>
        <taxon>Brassicales</taxon>
        <taxon>Brassicaceae</taxon>
        <taxon>Camelineae</taxon>
        <taxon>Arabidopsis</taxon>
    </lineage>
</organism>
<sequence>MSEEKRKQHFVLVHGSCHGAWCWYKVKPLLEAVGHRVTAVDLAASGIDTTRSITDIPTCEQYSEPLTKLLTSLPNDEKVVLVGHSFGGLNLAIAMEKFPEKISVAVFLTAFMPDTEHSPSFVLDKFGSNMPQEAWMGTEFEPYGSDNSGLSMFFSPDFMKLGLYQLSPVEDLELGLLLMRPGSLFINDLSKMKNFSDEGYGSVPRVFIVCKEDKAIPEERQRWMIDNFPVNLVMEMEETDHMPMFCKPQQLSDYFLKIADKFV</sequence>